<sequence length="200" mass="22393">MLAFCRSSLKSKKYFIILLALAAIAGLGTHAAWSSNGLPRIDNKTLARLAQQHPVVVLFRHAERCDRSTNQCLSDKTGITVKGTQDARELGNAFSADIPDFNLYSSNTVRTIQSATWFSAGKKLTVDKRFLQCGNEIYSAIKDLQRKAPDKNIVIFTHNHCLTYIAKDKRDATFKPDYLDGLVMHVEKGKVYLDGEFVNH</sequence>
<reference key="1">
    <citation type="journal article" date="2006" name="Mol. Microbiol.">
        <title>Role of pathogenicity island-associated integrases in the genome plasticity of uropathogenic Escherichia coli strain 536.</title>
        <authorList>
            <person name="Hochhut B."/>
            <person name="Wilde C."/>
            <person name="Balling G."/>
            <person name="Middendorf B."/>
            <person name="Dobrindt U."/>
            <person name="Brzuszkiewicz E."/>
            <person name="Gottschalk G."/>
            <person name="Carniel E."/>
            <person name="Hacker J."/>
        </authorList>
    </citation>
    <scope>NUCLEOTIDE SEQUENCE [LARGE SCALE GENOMIC DNA]</scope>
    <source>
        <strain>536 / UPEC</strain>
    </source>
</reference>
<gene>
    <name evidence="1" type="primary">ais</name>
    <name type="ordered locus">ECP_2295</name>
</gene>
<dbReference type="EC" id="3.1.3.-" evidence="1"/>
<dbReference type="EMBL" id="CP000247">
    <property type="protein sequence ID" value="ABG70289.1"/>
    <property type="molecule type" value="Genomic_DNA"/>
</dbReference>
<dbReference type="RefSeq" id="WP_000879111.1">
    <property type="nucleotide sequence ID" value="NC_008253.1"/>
</dbReference>
<dbReference type="SMR" id="Q0TFJ0"/>
<dbReference type="KEGG" id="ecp:ECP_2295"/>
<dbReference type="HOGENOM" id="CLU_106705_1_0_6"/>
<dbReference type="UniPathway" id="UPA00451"/>
<dbReference type="Proteomes" id="UP000009182">
    <property type="component" value="Chromosome"/>
</dbReference>
<dbReference type="GO" id="GO:0042597">
    <property type="term" value="C:periplasmic space"/>
    <property type="evidence" value="ECO:0007669"/>
    <property type="project" value="UniProtKB-SubCell"/>
</dbReference>
<dbReference type="GO" id="GO:0016791">
    <property type="term" value="F:phosphatase activity"/>
    <property type="evidence" value="ECO:0007669"/>
    <property type="project" value="UniProtKB-UniRule"/>
</dbReference>
<dbReference type="GO" id="GO:0008653">
    <property type="term" value="P:lipopolysaccharide metabolic process"/>
    <property type="evidence" value="ECO:0007669"/>
    <property type="project" value="UniProtKB-UniRule"/>
</dbReference>
<dbReference type="CDD" id="cd07040">
    <property type="entry name" value="HP"/>
    <property type="match status" value="1"/>
</dbReference>
<dbReference type="Gene3D" id="3.40.50.1240">
    <property type="entry name" value="Phosphoglycerate mutase-like"/>
    <property type="match status" value="1"/>
</dbReference>
<dbReference type="HAMAP" id="MF_01868">
    <property type="entry name" value="Ais"/>
    <property type="match status" value="1"/>
</dbReference>
<dbReference type="InterPro" id="IPR013078">
    <property type="entry name" value="His_Pase_superF_clade-1"/>
</dbReference>
<dbReference type="InterPro" id="IPR029033">
    <property type="entry name" value="His_PPase_superfam"/>
</dbReference>
<dbReference type="InterPro" id="IPR011310">
    <property type="entry name" value="LipoPS_heptP_Pase"/>
</dbReference>
<dbReference type="NCBIfam" id="NF011945">
    <property type="entry name" value="PRK15416.1"/>
    <property type="match status" value="1"/>
</dbReference>
<dbReference type="Pfam" id="PF00300">
    <property type="entry name" value="His_Phos_1"/>
    <property type="match status" value="1"/>
</dbReference>
<dbReference type="PIRSF" id="PIRSF011416">
    <property type="entry name" value="Ais-TraG-AfrS"/>
    <property type="match status" value="1"/>
</dbReference>
<dbReference type="SUPFAM" id="SSF53254">
    <property type="entry name" value="Phosphoglycerate mutase-like"/>
    <property type="match status" value="1"/>
</dbReference>
<accession>Q0TFJ0</accession>
<feature type="signal peptide" evidence="1">
    <location>
        <begin position="1"/>
        <end position="25"/>
    </location>
</feature>
<feature type="chain" id="PRO_0000380568" description="Lipopolysaccharide core heptose(II)-phosphate phosphatase">
    <location>
        <begin position="26"/>
        <end position="200"/>
    </location>
</feature>
<name>AIS_ECOL5</name>
<organism>
    <name type="scientific">Escherichia coli O6:K15:H31 (strain 536 / UPEC)</name>
    <dbReference type="NCBI Taxonomy" id="362663"/>
    <lineage>
        <taxon>Bacteria</taxon>
        <taxon>Pseudomonadati</taxon>
        <taxon>Pseudomonadota</taxon>
        <taxon>Gammaproteobacteria</taxon>
        <taxon>Enterobacterales</taxon>
        <taxon>Enterobacteriaceae</taxon>
        <taxon>Escherichia</taxon>
    </lineage>
</organism>
<comment type="function">
    <text evidence="1">Catalyzes the dephosphorylation of heptose(II) of the outer membrane lipopolysaccharide core.</text>
</comment>
<comment type="pathway">
    <text evidence="1">Bacterial outer membrane biogenesis; lipopolysaccharide metabolism.</text>
</comment>
<comment type="subcellular location">
    <subcellularLocation>
        <location evidence="1">Periplasm</location>
    </subcellularLocation>
</comment>
<comment type="similarity">
    <text evidence="1">Belongs to the phosphoglycerate mutase family. Ais subfamily.</text>
</comment>
<proteinExistence type="inferred from homology"/>
<keyword id="KW-0378">Hydrolase</keyword>
<keyword id="KW-0574">Periplasm</keyword>
<keyword id="KW-0732">Signal</keyword>
<protein>
    <recommendedName>
        <fullName evidence="1">Lipopolysaccharide core heptose(II)-phosphate phosphatase</fullName>
        <ecNumber evidence="1">3.1.3.-</ecNumber>
    </recommendedName>
</protein>
<evidence type="ECO:0000255" key="1">
    <source>
        <dbReference type="HAMAP-Rule" id="MF_01868"/>
    </source>
</evidence>